<evidence type="ECO:0000255" key="1">
    <source>
        <dbReference type="HAMAP-Rule" id="MF_01356"/>
    </source>
</evidence>
<dbReference type="EC" id="7.1.1.-" evidence="1"/>
<dbReference type="EMBL" id="CP000863">
    <property type="protein sequence ID" value="ACC56022.1"/>
    <property type="molecule type" value="Genomic_DNA"/>
</dbReference>
<dbReference type="RefSeq" id="WP_000878003.1">
    <property type="nucleotide sequence ID" value="NZ_CP031380.1"/>
</dbReference>
<dbReference type="SMR" id="B2HU42"/>
<dbReference type="KEGG" id="abc:ACICU_00710"/>
<dbReference type="HOGENOM" id="CLU_055737_7_3_6"/>
<dbReference type="Proteomes" id="UP000008839">
    <property type="component" value="Chromosome"/>
</dbReference>
<dbReference type="GO" id="GO:0005886">
    <property type="term" value="C:plasma membrane"/>
    <property type="evidence" value="ECO:0007669"/>
    <property type="project" value="UniProtKB-SubCell"/>
</dbReference>
<dbReference type="GO" id="GO:0045271">
    <property type="term" value="C:respiratory chain complex I"/>
    <property type="evidence" value="ECO:0007669"/>
    <property type="project" value="TreeGrafter"/>
</dbReference>
<dbReference type="GO" id="GO:0051539">
    <property type="term" value="F:4 iron, 4 sulfur cluster binding"/>
    <property type="evidence" value="ECO:0007669"/>
    <property type="project" value="UniProtKB-KW"/>
</dbReference>
<dbReference type="GO" id="GO:0005506">
    <property type="term" value="F:iron ion binding"/>
    <property type="evidence" value="ECO:0007669"/>
    <property type="project" value="UniProtKB-UniRule"/>
</dbReference>
<dbReference type="GO" id="GO:0008137">
    <property type="term" value="F:NADH dehydrogenase (ubiquinone) activity"/>
    <property type="evidence" value="ECO:0007669"/>
    <property type="project" value="InterPro"/>
</dbReference>
<dbReference type="GO" id="GO:0050136">
    <property type="term" value="F:NADH:ubiquinone reductase (non-electrogenic) activity"/>
    <property type="evidence" value="ECO:0007669"/>
    <property type="project" value="UniProtKB-UniRule"/>
</dbReference>
<dbReference type="GO" id="GO:0048038">
    <property type="term" value="F:quinone binding"/>
    <property type="evidence" value="ECO:0007669"/>
    <property type="project" value="UniProtKB-KW"/>
</dbReference>
<dbReference type="GO" id="GO:0009060">
    <property type="term" value="P:aerobic respiration"/>
    <property type="evidence" value="ECO:0007669"/>
    <property type="project" value="TreeGrafter"/>
</dbReference>
<dbReference type="GO" id="GO:0015990">
    <property type="term" value="P:electron transport coupled proton transport"/>
    <property type="evidence" value="ECO:0007669"/>
    <property type="project" value="TreeGrafter"/>
</dbReference>
<dbReference type="FunFam" id="3.40.50.12280:FF:000002">
    <property type="entry name" value="NADH-quinone oxidoreductase subunit B"/>
    <property type="match status" value="1"/>
</dbReference>
<dbReference type="Gene3D" id="3.40.50.12280">
    <property type="match status" value="1"/>
</dbReference>
<dbReference type="HAMAP" id="MF_01356">
    <property type="entry name" value="NDH1_NuoB"/>
    <property type="match status" value="1"/>
</dbReference>
<dbReference type="InterPro" id="IPR006137">
    <property type="entry name" value="NADH_UbQ_OxRdtase-like_20kDa"/>
</dbReference>
<dbReference type="InterPro" id="IPR006138">
    <property type="entry name" value="NADH_UQ_OxRdtase_20Kd_su"/>
</dbReference>
<dbReference type="NCBIfam" id="TIGR01957">
    <property type="entry name" value="nuoB_fam"/>
    <property type="match status" value="1"/>
</dbReference>
<dbReference type="NCBIfam" id="NF005012">
    <property type="entry name" value="PRK06411.1"/>
    <property type="match status" value="1"/>
</dbReference>
<dbReference type="PANTHER" id="PTHR11995">
    <property type="entry name" value="NADH DEHYDROGENASE"/>
    <property type="match status" value="1"/>
</dbReference>
<dbReference type="PANTHER" id="PTHR11995:SF14">
    <property type="entry name" value="NADH DEHYDROGENASE [UBIQUINONE] IRON-SULFUR PROTEIN 7, MITOCHONDRIAL"/>
    <property type="match status" value="1"/>
</dbReference>
<dbReference type="Pfam" id="PF01058">
    <property type="entry name" value="Oxidored_q6"/>
    <property type="match status" value="1"/>
</dbReference>
<dbReference type="SUPFAM" id="SSF56770">
    <property type="entry name" value="HydA/Nqo6-like"/>
    <property type="match status" value="1"/>
</dbReference>
<dbReference type="PROSITE" id="PS01150">
    <property type="entry name" value="COMPLEX1_20K"/>
    <property type="match status" value="1"/>
</dbReference>
<keyword id="KW-0004">4Fe-4S</keyword>
<keyword id="KW-0997">Cell inner membrane</keyword>
<keyword id="KW-1003">Cell membrane</keyword>
<keyword id="KW-0408">Iron</keyword>
<keyword id="KW-0411">Iron-sulfur</keyword>
<keyword id="KW-0472">Membrane</keyword>
<keyword id="KW-0479">Metal-binding</keyword>
<keyword id="KW-0520">NAD</keyword>
<keyword id="KW-0874">Quinone</keyword>
<keyword id="KW-1278">Translocase</keyword>
<keyword id="KW-0813">Transport</keyword>
<keyword id="KW-0830">Ubiquinone</keyword>
<feature type="chain" id="PRO_0000376106" description="NADH-quinone oxidoreductase subunit B">
    <location>
        <begin position="1"/>
        <end position="225"/>
    </location>
</feature>
<feature type="binding site" evidence="1">
    <location>
        <position position="65"/>
    </location>
    <ligand>
        <name>[4Fe-4S] cluster</name>
        <dbReference type="ChEBI" id="CHEBI:49883"/>
    </ligand>
</feature>
<feature type="binding site" evidence="1">
    <location>
        <position position="66"/>
    </location>
    <ligand>
        <name>[4Fe-4S] cluster</name>
        <dbReference type="ChEBI" id="CHEBI:49883"/>
    </ligand>
</feature>
<feature type="binding site" evidence="1">
    <location>
        <position position="131"/>
    </location>
    <ligand>
        <name>[4Fe-4S] cluster</name>
        <dbReference type="ChEBI" id="CHEBI:49883"/>
    </ligand>
</feature>
<feature type="binding site" evidence="1">
    <location>
        <position position="160"/>
    </location>
    <ligand>
        <name>[4Fe-4S] cluster</name>
        <dbReference type="ChEBI" id="CHEBI:49883"/>
    </ligand>
</feature>
<accession>B2HU42</accession>
<protein>
    <recommendedName>
        <fullName evidence="1">NADH-quinone oxidoreductase subunit B</fullName>
        <ecNumber evidence="1">7.1.1.-</ecNumber>
    </recommendedName>
    <alternativeName>
        <fullName evidence="1">NADH dehydrogenase I subunit B</fullName>
    </alternativeName>
    <alternativeName>
        <fullName evidence="1">NDH-1 subunit B</fullName>
    </alternativeName>
</protein>
<organism>
    <name type="scientific">Acinetobacter baumannii (strain ACICU)</name>
    <dbReference type="NCBI Taxonomy" id="405416"/>
    <lineage>
        <taxon>Bacteria</taxon>
        <taxon>Pseudomonadati</taxon>
        <taxon>Pseudomonadota</taxon>
        <taxon>Gammaproteobacteria</taxon>
        <taxon>Moraxellales</taxon>
        <taxon>Moraxellaceae</taxon>
        <taxon>Acinetobacter</taxon>
        <taxon>Acinetobacter calcoaceticus/baumannii complex</taxon>
    </lineage>
</organism>
<gene>
    <name evidence="1" type="primary">nuoB</name>
    <name type="ordered locus">ACICU_00710</name>
</gene>
<name>NUOB_ACIBC</name>
<comment type="function">
    <text evidence="1">NDH-1 shuttles electrons from NADH, via FMN and iron-sulfur (Fe-S) centers, to quinones in the respiratory chain. The immediate electron acceptor for the enzyme in this species is believed to be ubiquinone. Couples the redox reaction to proton translocation (for every two electrons transferred, four hydrogen ions are translocated across the cytoplasmic membrane), and thus conserves the redox energy in a proton gradient.</text>
</comment>
<comment type="catalytic activity">
    <reaction evidence="1">
        <text>a quinone + NADH + 5 H(+)(in) = a quinol + NAD(+) + 4 H(+)(out)</text>
        <dbReference type="Rhea" id="RHEA:57888"/>
        <dbReference type="ChEBI" id="CHEBI:15378"/>
        <dbReference type="ChEBI" id="CHEBI:24646"/>
        <dbReference type="ChEBI" id="CHEBI:57540"/>
        <dbReference type="ChEBI" id="CHEBI:57945"/>
        <dbReference type="ChEBI" id="CHEBI:132124"/>
    </reaction>
</comment>
<comment type="cofactor">
    <cofactor evidence="1">
        <name>[4Fe-4S] cluster</name>
        <dbReference type="ChEBI" id="CHEBI:49883"/>
    </cofactor>
    <text evidence="1">Binds 1 [4Fe-4S] cluster.</text>
</comment>
<comment type="subunit">
    <text evidence="1">NDH-1 is composed of 14 different subunits. Subunits NuoB, C, D, E, F, and G constitute the peripheral sector of the complex.</text>
</comment>
<comment type="subcellular location">
    <subcellularLocation>
        <location evidence="1">Cell inner membrane</location>
        <topology evidence="1">Peripheral membrane protein</topology>
        <orientation evidence="1">Cytoplasmic side</orientation>
    </subcellularLocation>
</comment>
<comment type="similarity">
    <text evidence="1">Belongs to the complex I 20 kDa subunit family.</text>
</comment>
<sequence length="225" mass="25552">MKYTLTRANPDADQYPLQDRQIVTDPLEEEVNKNVFMTRLEDVLHTAVNWGRKNSLWPFNFGTSCCYVEYATTLTGVHDLSRFGAEVIRASPRQADLMIVAGTCFVKMAPVIQRLYEQMLEPKWVISMGACANSGGMYDIYSVVQGVDKIIPVDVYVPGCPPRPEALIQALMLLQDQIQLERRPLSAVIGDDLQPVYKPKMMPERDRKNAQRIAVKNLRSMDEIK</sequence>
<proteinExistence type="inferred from homology"/>
<reference key="1">
    <citation type="journal article" date="2008" name="Antimicrob. Agents Chemother.">
        <title>Whole-genome pyrosequencing of an epidemic multidrug-resistant Acinetobacter baumannii strain belonging to the European clone II group.</title>
        <authorList>
            <person name="Iacono M."/>
            <person name="Villa L."/>
            <person name="Fortini D."/>
            <person name="Bordoni R."/>
            <person name="Imperi F."/>
            <person name="Bonnal R.J."/>
            <person name="Sicheritz-Ponten T."/>
            <person name="De Bellis G."/>
            <person name="Visca P."/>
            <person name="Cassone A."/>
            <person name="Carattoli A."/>
        </authorList>
    </citation>
    <scope>NUCLEOTIDE SEQUENCE [LARGE SCALE GENOMIC DNA]</scope>
    <source>
        <strain>ACICU</strain>
    </source>
</reference>